<reference key="1">
    <citation type="journal article" date="2007" name="Nat. Biotechnol.">
        <title>Complete genome sequence of the fish pathogen Flavobacterium psychrophilum.</title>
        <authorList>
            <person name="Duchaud E."/>
            <person name="Boussaha M."/>
            <person name="Loux V."/>
            <person name="Bernardet J.-F."/>
            <person name="Michel C."/>
            <person name="Kerouault B."/>
            <person name="Mondot S."/>
            <person name="Nicolas P."/>
            <person name="Bossy R."/>
            <person name="Caron C."/>
            <person name="Bessieres P."/>
            <person name="Gibrat J.-F."/>
            <person name="Claverol S."/>
            <person name="Dumetz F."/>
            <person name="Le Henaff M."/>
            <person name="Benmansour A."/>
        </authorList>
    </citation>
    <scope>NUCLEOTIDE SEQUENCE [LARGE SCALE GENOMIC DNA]</scope>
    <source>
        <strain>ATCC 49511 / DSM 21280 / CIP 103535 / JIP02/86</strain>
    </source>
</reference>
<name>OBG_FLAPJ</name>
<gene>
    <name evidence="1" type="primary">obg</name>
    <name type="ordered locus">FP1357</name>
</gene>
<evidence type="ECO:0000255" key="1">
    <source>
        <dbReference type="HAMAP-Rule" id="MF_01454"/>
    </source>
</evidence>
<evidence type="ECO:0000255" key="2">
    <source>
        <dbReference type="PROSITE-ProRule" id="PRU01231"/>
    </source>
</evidence>
<comment type="function">
    <text evidence="1">An essential GTPase which binds GTP, GDP and possibly (p)ppGpp with moderate affinity, with high nucleotide exchange rates and a fairly low GTP hydrolysis rate. Plays a role in control of the cell cycle, stress response, ribosome biogenesis and in those bacteria that undergo differentiation, in morphogenesis control.</text>
</comment>
<comment type="cofactor">
    <cofactor evidence="1">
        <name>Mg(2+)</name>
        <dbReference type="ChEBI" id="CHEBI:18420"/>
    </cofactor>
</comment>
<comment type="subunit">
    <text evidence="1">Monomer.</text>
</comment>
<comment type="subcellular location">
    <subcellularLocation>
        <location evidence="1">Cytoplasm</location>
    </subcellularLocation>
</comment>
<comment type="similarity">
    <text evidence="1">Belongs to the TRAFAC class OBG-HflX-like GTPase superfamily. OBG GTPase family.</text>
</comment>
<accession>A6GZB7</accession>
<protein>
    <recommendedName>
        <fullName evidence="1">GTPase Obg</fullName>
        <ecNumber evidence="1">3.6.5.-</ecNumber>
    </recommendedName>
    <alternativeName>
        <fullName evidence="1">GTP-binding protein Obg</fullName>
    </alternativeName>
</protein>
<keyword id="KW-0963">Cytoplasm</keyword>
<keyword id="KW-0342">GTP-binding</keyword>
<keyword id="KW-0378">Hydrolase</keyword>
<keyword id="KW-0460">Magnesium</keyword>
<keyword id="KW-0479">Metal-binding</keyword>
<keyword id="KW-0547">Nucleotide-binding</keyword>
<keyword id="KW-1185">Reference proteome</keyword>
<sequence>MTEGNFVDYTKIYVSSGKGGKGSTHLHREKFIEKGGPDGGDGGRGGHVYLVGEKSLWTLFHLKFARHVKAGHGGDGGSSRSTGSDGEDKYIEVPLGTVVRDKETNEILFEITEHGEKRIIAEGGKGGLGNWHFRSSTNQTPRYSQPGLPAQEADIVLELKVLADVGLVGFPNAGKSTLLSVLTSAKPKIADYPFTTLKPNLGIVAYRDYQSFVIADIPGIIEGAAEGKGLGHYFLRHIERNSTLLFLVPADADDIKKEYDILLDELRRYNPEMLDKDRLIVVSKCDMLDEELQVEMKKQLDKDFAGIPYLFISSIAQQGLVELKDKLWAMLNVEA</sequence>
<dbReference type="EC" id="3.6.5.-" evidence="1"/>
<dbReference type="EMBL" id="AM398681">
    <property type="protein sequence ID" value="CAL43440.1"/>
    <property type="molecule type" value="Genomic_DNA"/>
</dbReference>
<dbReference type="RefSeq" id="YP_001296251.1">
    <property type="nucleotide sequence ID" value="NC_009613.3"/>
</dbReference>
<dbReference type="SMR" id="A6GZB7"/>
<dbReference type="STRING" id="402612.FP1357"/>
<dbReference type="EnsemblBacteria" id="CAL43440">
    <property type="protein sequence ID" value="CAL43440"/>
    <property type="gene ID" value="FP1357"/>
</dbReference>
<dbReference type="KEGG" id="fps:FP1357"/>
<dbReference type="PATRIC" id="fig|402612.5.peg.1374"/>
<dbReference type="eggNOG" id="COG0536">
    <property type="taxonomic scope" value="Bacteria"/>
</dbReference>
<dbReference type="HOGENOM" id="CLU_011747_2_0_10"/>
<dbReference type="OrthoDB" id="9807318at2"/>
<dbReference type="Proteomes" id="UP000006394">
    <property type="component" value="Chromosome"/>
</dbReference>
<dbReference type="GO" id="GO:0005737">
    <property type="term" value="C:cytoplasm"/>
    <property type="evidence" value="ECO:0007669"/>
    <property type="project" value="UniProtKB-SubCell"/>
</dbReference>
<dbReference type="GO" id="GO:0005525">
    <property type="term" value="F:GTP binding"/>
    <property type="evidence" value="ECO:0007669"/>
    <property type="project" value="UniProtKB-UniRule"/>
</dbReference>
<dbReference type="GO" id="GO:0003924">
    <property type="term" value="F:GTPase activity"/>
    <property type="evidence" value="ECO:0007669"/>
    <property type="project" value="UniProtKB-UniRule"/>
</dbReference>
<dbReference type="GO" id="GO:0000287">
    <property type="term" value="F:magnesium ion binding"/>
    <property type="evidence" value="ECO:0007669"/>
    <property type="project" value="InterPro"/>
</dbReference>
<dbReference type="GO" id="GO:0042254">
    <property type="term" value="P:ribosome biogenesis"/>
    <property type="evidence" value="ECO:0007669"/>
    <property type="project" value="UniProtKB-UniRule"/>
</dbReference>
<dbReference type="CDD" id="cd01898">
    <property type="entry name" value="Obg"/>
    <property type="match status" value="1"/>
</dbReference>
<dbReference type="FunFam" id="2.70.210.12:FF:000001">
    <property type="entry name" value="GTPase Obg"/>
    <property type="match status" value="1"/>
</dbReference>
<dbReference type="Gene3D" id="2.70.210.12">
    <property type="entry name" value="GTP1/OBG domain"/>
    <property type="match status" value="1"/>
</dbReference>
<dbReference type="Gene3D" id="3.40.50.300">
    <property type="entry name" value="P-loop containing nucleotide triphosphate hydrolases"/>
    <property type="match status" value="1"/>
</dbReference>
<dbReference type="HAMAP" id="MF_01454">
    <property type="entry name" value="GTPase_Obg"/>
    <property type="match status" value="1"/>
</dbReference>
<dbReference type="InterPro" id="IPR031167">
    <property type="entry name" value="G_OBG"/>
</dbReference>
<dbReference type="InterPro" id="IPR006073">
    <property type="entry name" value="GTP-bd"/>
</dbReference>
<dbReference type="InterPro" id="IPR014100">
    <property type="entry name" value="GTP-bd_Obg/CgtA"/>
</dbReference>
<dbReference type="InterPro" id="IPR006074">
    <property type="entry name" value="GTP1-OBG_CS"/>
</dbReference>
<dbReference type="InterPro" id="IPR006169">
    <property type="entry name" value="GTP1_OBG_dom"/>
</dbReference>
<dbReference type="InterPro" id="IPR036726">
    <property type="entry name" value="GTP1_OBG_dom_sf"/>
</dbReference>
<dbReference type="InterPro" id="IPR045086">
    <property type="entry name" value="OBG_GTPase"/>
</dbReference>
<dbReference type="InterPro" id="IPR027417">
    <property type="entry name" value="P-loop_NTPase"/>
</dbReference>
<dbReference type="NCBIfam" id="TIGR02729">
    <property type="entry name" value="Obg_CgtA"/>
    <property type="match status" value="1"/>
</dbReference>
<dbReference type="NCBIfam" id="NF008955">
    <property type="entry name" value="PRK12297.1"/>
    <property type="match status" value="1"/>
</dbReference>
<dbReference type="NCBIfam" id="NF008956">
    <property type="entry name" value="PRK12299.1"/>
    <property type="match status" value="1"/>
</dbReference>
<dbReference type="PANTHER" id="PTHR11702">
    <property type="entry name" value="DEVELOPMENTALLY REGULATED GTP-BINDING PROTEIN-RELATED"/>
    <property type="match status" value="1"/>
</dbReference>
<dbReference type="PANTHER" id="PTHR11702:SF31">
    <property type="entry name" value="MITOCHONDRIAL RIBOSOME-ASSOCIATED GTPASE 2"/>
    <property type="match status" value="1"/>
</dbReference>
<dbReference type="Pfam" id="PF01018">
    <property type="entry name" value="GTP1_OBG"/>
    <property type="match status" value="1"/>
</dbReference>
<dbReference type="Pfam" id="PF01926">
    <property type="entry name" value="MMR_HSR1"/>
    <property type="match status" value="1"/>
</dbReference>
<dbReference type="PIRSF" id="PIRSF002401">
    <property type="entry name" value="GTP_bd_Obg/CgtA"/>
    <property type="match status" value="1"/>
</dbReference>
<dbReference type="PRINTS" id="PR00326">
    <property type="entry name" value="GTP1OBG"/>
</dbReference>
<dbReference type="SUPFAM" id="SSF82051">
    <property type="entry name" value="Obg GTP-binding protein N-terminal domain"/>
    <property type="match status" value="1"/>
</dbReference>
<dbReference type="SUPFAM" id="SSF52540">
    <property type="entry name" value="P-loop containing nucleoside triphosphate hydrolases"/>
    <property type="match status" value="1"/>
</dbReference>
<dbReference type="PROSITE" id="PS51710">
    <property type="entry name" value="G_OBG"/>
    <property type="match status" value="1"/>
</dbReference>
<dbReference type="PROSITE" id="PS00905">
    <property type="entry name" value="GTP1_OBG"/>
    <property type="match status" value="1"/>
</dbReference>
<dbReference type="PROSITE" id="PS51883">
    <property type="entry name" value="OBG"/>
    <property type="match status" value="1"/>
</dbReference>
<organism>
    <name type="scientific">Flavobacterium psychrophilum (strain ATCC 49511 / DSM 21280 / CIP 103535 / JIP02/86)</name>
    <dbReference type="NCBI Taxonomy" id="402612"/>
    <lineage>
        <taxon>Bacteria</taxon>
        <taxon>Pseudomonadati</taxon>
        <taxon>Bacteroidota</taxon>
        <taxon>Flavobacteriia</taxon>
        <taxon>Flavobacteriales</taxon>
        <taxon>Flavobacteriaceae</taxon>
        <taxon>Flavobacterium</taxon>
    </lineage>
</organism>
<proteinExistence type="inferred from homology"/>
<feature type="chain" id="PRO_0000385934" description="GTPase Obg">
    <location>
        <begin position="1"/>
        <end position="335"/>
    </location>
</feature>
<feature type="domain" description="Obg" evidence="2">
    <location>
        <begin position="4"/>
        <end position="162"/>
    </location>
</feature>
<feature type="domain" description="OBG-type G" evidence="1">
    <location>
        <begin position="163"/>
        <end position="332"/>
    </location>
</feature>
<feature type="binding site" evidence="1">
    <location>
        <begin position="169"/>
        <end position="176"/>
    </location>
    <ligand>
        <name>GTP</name>
        <dbReference type="ChEBI" id="CHEBI:37565"/>
    </ligand>
</feature>
<feature type="binding site" evidence="1">
    <location>
        <position position="176"/>
    </location>
    <ligand>
        <name>Mg(2+)</name>
        <dbReference type="ChEBI" id="CHEBI:18420"/>
    </ligand>
</feature>
<feature type="binding site" evidence="1">
    <location>
        <begin position="194"/>
        <end position="198"/>
    </location>
    <ligand>
        <name>GTP</name>
        <dbReference type="ChEBI" id="CHEBI:37565"/>
    </ligand>
</feature>
<feature type="binding site" evidence="1">
    <location>
        <position position="196"/>
    </location>
    <ligand>
        <name>Mg(2+)</name>
        <dbReference type="ChEBI" id="CHEBI:18420"/>
    </ligand>
</feature>
<feature type="binding site" evidence="1">
    <location>
        <begin position="216"/>
        <end position="219"/>
    </location>
    <ligand>
        <name>GTP</name>
        <dbReference type="ChEBI" id="CHEBI:37565"/>
    </ligand>
</feature>
<feature type="binding site" evidence="1">
    <location>
        <begin position="283"/>
        <end position="286"/>
    </location>
    <ligand>
        <name>GTP</name>
        <dbReference type="ChEBI" id="CHEBI:37565"/>
    </ligand>
</feature>
<feature type="binding site" evidence="1">
    <location>
        <begin position="313"/>
        <end position="315"/>
    </location>
    <ligand>
        <name>GTP</name>
        <dbReference type="ChEBI" id="CHEBI:37565"/>
    </ligand>
</feature>